<name>RUVA_MYCPN</name>
<accession>P75243</accession>
<organism>
    <name type="scientific">Mycoplasma pneumoniae (strain ATCC 29342 / M129 / Subtype 1)</name>
    <name type="common">Mycoplasmoides pneumoniae</name>
    <dbReference type="NCBI Taxonomy" id="272634"/>
    <lineage>
        <taxon>Bacteria</taxon>
        <taxon>Bacillati</taxon>
        <taxon>Mycoplasmatota</taxon>
        <taxon>Mycoplasmoidales</taxon>
        <taxon>Mycoplasmoidaceae</taxon>
        <taxon>Mycoplasmoides</taxon>
    </lineage>
</organism>
<gene>
    <name evidence="1" type="primary">ruvA</name>
    <name type="ordered locus">MPN_535</name>
    <name type="ORF">MP307</name>
</gene>
<reference key="1">
    <citation type="journal article" date="1996" name="Nucleic Acids Res.">
        <title>Complete sequence analysis of the genome of the bacterium Mycoplasma pneumoniae.</title>
        <authorList>
            <person name="Himmelreich R."/>
            <person name="Hilbert H."/>
            <person name="Plagens H."/>
            <person name="Pirkl E."/>
            <person name="Li B.-C."/>
            <person name="Herrmann R."/>
        </authorList>
    </citation>
    <scope>NUCLEOTIDE SEQUENCE [LARGE SCALE GENOMIC DNA]</scope>
    <source>
        <strain>ATCC 29342 / M129 / Subtype 1</strain>
    </source>
</reference>
<comment type="function">
    <text evidence="1">The RuvA-RuvB-RuvC complex processes Holliday junction (HJ) DNA during genetic recombination and DNA repair, while the RuvA-RuvB complex plays an important role in the rescue of blocked DNA replication forks via replication fork reversal (RFR). RuvA specifically binds to HJ cruciform DNA, conferring on it an open structure. The RuvB hexamer acts as an ATP-dependent pump, pulling dsDNA into and through the RuvAB complex. HJ branch migration allows RuvC to scan DNA until it finds its consensus sequence, where it cleaves and resolves the cruciform DNA.</text>
</comment>
<comment type="subunit">
    <text evidence="1">Homotetramer. Forms an RuvA(8)-RuvB(12)-Holliday junction (HJ) complex. HJ DNA is sandwiched between 2 RuvA tetramers; dsDNA enters through RuvA and exits via RuvB. An RuvB hexamer assembles on each DNA strand where it exits the tetramer. Each RuvB hexamer is contacted by two RuvA subunits (via domain III) on 2 adjacent RuvB subunits; this complex drives branch migration. In the full resolvosome a probable DNA-RuvA(4)-RuvB(12)-RuvC(2) complex forms which resolves the HJ.</text>
</comment>
<comment type="subcellular location">
    <subcellularLocation>
        <location evidence="1">Cytoplasm</location>
    </subcellularLocation>
</comment>
<comment type="domain">
    <text evidence="1">Has three domains with a flexible linker between the domains II and III and assumes an 'L' shape. Domain III is highly mobile and contacts RuvB.</text>
</comment>
<comment type="similarity">
    <text evidence="1">Belongs to the RuvA family.</text>
</comment>
<protein>
    <recommendedName>
        <fullName evidence="1">Holliday junction branch migration complex subunit RuvA</fullName>
    </recommendedName>
</protein>
<dbReference type="EMBL" id="U00089">
    <property type="protein sequence ID" value="AAB95955.1"/>
    <property type="molecule type" value="Genomic_DNA"/>
</dbReference>
<dbReference type="PIR" id="S73633">
    <property type="entry name" value="S73633"/>
</dbReference>
<dbReference type="RefSeq" id="NP_110224.1">
    <property type="nucleotide sequence ID" value="NC_000912.1"/>
</dbReference>
<dbReference type="RefSeq" id="WP_010874892.1">
    <property type="nucleotide sequence ID" value="NZ_OU342337.1"/>
</dbReference>
<dbReference type="SMR" id="P75243"/>
<dbReference type="IntAct" id="P75243">
    <property type="interactions" value="2"/>
</dbReference>
<dbReference type="STRING" id="272634.MPN_535"/>
<dbReference type="EnsemblBacteria" id="AAB95955">
    <property type="protein sequence ID" value="AAB95955"/>
    <property type="gene ID" value="MPN_535"/>
</dbReference>
<dbReference type="GeneID" id="66608783"/>
<dbReference type="KEGG" id="mpn:MPN_535"/>
<dbReference type="PATRIC" id="fig|272634.6.peg.597"/>
<dbReference type="HOGENOM" id="CLU_087936_1_1_14"/>
<dbReference type="OrthoDB" id="5293449at2"/>
<dbReference type="BioCyc" id="MPNE272634:G1GJ3-884-MONOMER"/>
<dbReference type="Proteomes" id="UP000000808">
    <property type="component" value="Chromosome"/>
</dbReference>
<dbReference type="GO" id="GO:0005737">
    <property type="term" value="C:cytoplasm"/>
    <property type="evidence" value="ECO:0007669"/>
    <property type="project" value="UniProtKB-SubCell"/>
</dbReference>
<dbReference type="GO" id="GO:0009379">
    <property type="term" value="C:Holliday junction helicase complex"/>
    <property type="evidence" value="ECO:0007669"/>
    <property type="project" value="InterPro"/>
</dbReference>
<dbReference type="GO" id="GO:0048476">
    <property type="term" value="C:Holliday junction resolvase complex"/>
    <property type="evidence" value="ECO:0007669"/>
    <property type="project" value="UniProtKB-UniRule"/>
</dbReference>
<dbReference type="GO" id="GO:0005524">
    <property type="term" value="F:ATP binding"/>
    <property type="evidence" value="ECO:0007669"/>
    <property type="project" value="InterPro"/>
</dbReference>
<dbReference type="GO" id="GO:0000400">
    <property type="term" value="F:four-way junction DNA binding"/>
    <property type="evidence" value="ECO:0007669"/>
    <property type="project" value="UniProtKB-UniRule"/>
</dbReference>
<dbReference type="GO" id="GO:0009378">
    <property type="term" value="F:four-way junction helicase activity"/>
    <property type="evidence" value="ECO:0007669"/>
    <property type="project" value="InterPro"/>
</dbReference>
<dbReference type="GO" id="GO:0006310">
    <property type="term" value="P:DNA recombination"/>
    <property type="evidence" value="ECO:0007669"/>
    <property type="project" value="UniProtKB-UniRule"/>
</dbReference>
<dbReference type="GO" id="GO:0006281">
    <property type="term" value="P:DNA repair"/>
    <property type="evidence" value="ECO:0007669"/>
    <property type="project" value="UniProtKB-UniRule"/>
</dbReference>
<dbReference type="CDD" id="cd14332">
    <property type="entry name" value="UBA_RuvA_C"/>
    <property type="match status" value="1"/>
</dbReference>
<dbReference type="Gene3D" id="1.10.150.20">
    <property type="entry name" value="5' to 3' exonuclease, C-terminal subdomain"/>
    <property type="match status" value="1"/>
</dbReference>
<dbReference type="HAMAP" id="MF_00031">
    <property type="entry name" value="DNA_HJ_migration_RuvA"/>
    <property type="match status" value="1"/>
</dbReference>
<dbReference type="InterPro" id="IPR013849">
    <property type="entry name" value="DNA_helicase_Holl-junc_RuvA_I"/>
</dbReference>
<dbReference type="InterPro" id="IPR000085">
    <property type="entry name" value="RuvA"/>
</dbReference>
<dbReference type="InterPro" id="IPR010994">
    <property type="entry name" value="RuvA_2-like"/>
</dbReference>
<dbReference type="InterPro" id="IPR011114">
    <property type="entry name" value="RuvA_C"/>
</dbReference>
<dbReference type="NCBIfam" id="TIGR00084">
    <property type="entry name" value="ruvA"/>
    <property type="match status" value="1"/>
</dbReference>
<dbReference type="PANTHER" id="PTHR38692">
    <property type="entry name" value="PROTEIN SMG"/>
    <property type="match status" value="1"/>
</dbReference>
<dbReference type="PANTHER" id="PTHR38692:SF1">
    <property type="entry name" value="PROTEIN SMG"/>
    <property type="match status" value="1"/>
</dbReference>
<dbReference type="Pfam" id="PF07499">
    <property type="entry name" value="RuvA_C"/>
    <property type="match status" value="1"/>
</dbReference>
<dbReference type="Pfam" id="PF01330">
    <property type="entry name" value="RuvA_N"/>
    <property type="match status" value="1"/>
</dbReference>
<dbReference type="SUPFAM" id="SSF47781">
    <property type="entry name" value="RuvA domain 2-like"/>
    <property type="match status" value="1"/>
</dbReference>
<proteinExistence type="inferred from homology"/>
<sequence length="206" mass="23660">MIASIFGKITFVGKRKIIVEANCISYWFNVKENHSFEKNLEKPRQVFCQIIKRMVTNQILEEGFAFNTLEEKEWFSKFIELNGIGSKTALNLLNNNLEEMRDYIKNSNYHALTKLTGSNSKVARALLALELYDRDDGGKRIKPNTAMANDYDEMFDTLKSLGYKPQDIQNALSKIEIKPNFDVSEVIAEVIKLMSFQNNEVTNKTA</sequence>
<feature type="chain" id="PRO_0000094651" description="Holliday junction branch migration complex subunit RuvA">
    <location>
        <begin position="1"/>
        <end position="206"/>
    </location>
</feature>
<feature type="region of interest" description="Domain I" evidence="1">
    <location>
        <begin position="1"/>
        <end position="67"/>
    </location>
</feature>
<feature type="region of interest" description="Domain II" evidence="1">
    <location>
        <begin position="68"/>
        <end position="141"/>
    </location>
</feature>
<feature type="region of interest" description="Flexible linker" evidence="1">
    <location>
        <begin position="141"/>
        <end position="145"/>
    </location>
</feature>
<feature type="region of interest" description="Domain III" evidence="1">
    <location>
        <begin position="146"/>
        <end position="206"/>
    </location>
</feature>
<evidence type="ECO:0000255" key="1">
    <source>
        <dbReference type="HAMAP-Rule" id="MF_00031"/>
    </source>
</evidence>
<keyword id="KW-0963">Cytoplasm</keyword>
<keyword id="KW-0227">DNA damage</keyword>
<keyword id="KW-0233">DNA recombination</keyword>
<keyword id="KW-0234">DNA repair</keyword>
<keyword id="KW-0238">DNA-binding</keyword>
<keyword id="KW-1185">Reference proteome</keyword>